<comment type="function">
    <text evidence="4">Reversible hydration of carbon dioxide.</text>
</comment>
<comment type="catalytic activity">
    <reaction evidence="4">
        <text>hydrogencarbonate + H(+) = CO2 + H2O</text>
        <dbReference type="Rhea" id="RHEA:10748"/>
        <dbReference type="ChEBI" id="CHEBI:15377"/>
        <dbReference type="ChEBI" id="CHEBI:15378"/>
        <dbReference type="ChEBI" id="CHEBI:16526"/>
        <dbReference type="ChEBI" id="CHEBI:17544"/>
        <dbReference type="EC" id="4.2.1.1"/>
    </reaction>
</comment>
<comment type="cofactor">
    <cofactor evidence="2">
        <name>Zn(2+)</name>
        <dbReference type="ChEBI" id="CHEBI:29105"/>
    </cofactor>
</comment>
<comment type="activity regulation">
    <text evidence="5 6 7">Inhibited by coumarins, sulfonamide derivatives such as acetazolamide (AZA) and Foscarnet (phosphonoformate trisodium salt).</text>
</comment>
<comment type="tissue specificity">
    <text evidence="4">Expressed in spleen, lung, kidney, heart, brain, skeletal muscle and testis.</text>
</comment>
<comment type="similarity">
    <text evidence="8">Belongs to the alpha-carbonic anhydrase family.</text>
</comment>
<dbReference type="EC" id="4.2.1.1" evidence="4"/>
<dbReference type="EMBL" id="AF231123">
    <property type="protein sequence ID" value="AAK16672.1"/>
    <property type="molecule type" value="mRNA"/>
</dbReference>
<dbReference type="EMBL" id="AK010166">
    <property type="protein sequence ID" value="BAB26742.1"/>
    <property type="molecule type" value="mRNA"/>
</dbReference>
<dbReference type="EMBL" id="AK150871">
    <property type="protein sequence ID" value="BAE29922.1"/>
    <property type="molecule type" value="mRNA"/>
</dbReference>
<dbReference type="EMBL" id="AK150897">
    <property type="protein sequence ID" value="BAE29942.1"/>
    <property type="molecule type" value="mRNA"/>
</dbReference>
<dbReference type="EMBL" id="AK151519">
    <property type="protein sequence ID" value="BAE30468.1"/>
    <property type="molecule type" value="mRNA"/>
</dbReference>
<dbReference type="EMBL" id="AK151978">
    <property type="protein sequence ID" value="BAE30845.1"/>
    <property type="molecule type" value="mRNA"/>
</dbReference>
<dbReference type="EMBL" id="AK153080">
    <property type="protein sequence ID" value="BAE31705.1"/>
    <property type="molecule type" value="mRNA"/>
</dbReference>
<dbReference type="EMBL" id="AK153258">
    <property type="protein sequence ID" value="BAE31849.1"/>
    <property type="molecule type" value="mRNA"/>
</dbReference>
<dbReference type="EMBL" id="AK153353">
    <property type="protein sequence ID" value="BAE31927.1"/>
    <property type="molecule type" value="mRNA"/>
</dbReference>
<dbReference type="EMBL" id="AK162621">
    <property type="protein sequence ID" value="BAE36996.1"/>
    <property type="molecule type" value="mRNA"/>
</dbReference>
<dbReference type="EMBL" id="BC064050">
    <property type="protein sequence ID" value="AAH64050.1"/>
    <property type="molecule type" value="mRNA"/>
</dbReference>
<dbReference type="CCDS" id="CCDS17247.1"/>
<dbReference type="RefSeq" id="NP_078771.1">
    <property type="nucleotide sequence ID" value="NM_024495.5"/>
</dbReference>
<dbReference type="SMR" id="Q9D6N1"/>
<dbReference type="BioGRID" id="215042">
    <property type="interactions" value="1"/>
</dbReference>
<dbReference type="FunCoup" id="Q9D6N1">
    <property type="interactions" value="854"/>
</dbReference>
<dbReference type="STRING" id="10090.ENSMUSP00000029071"/>
<dbReference type="BindingDB" id="Q9D6N1"/>
<dbReference type="ChEMBL" id="CHEMBL2186"/>
<dbReference type="DrugCentral" id="Q9D6N1"/>
<dbReference type="GuidetoPHARMACOLOGY" id="2748"/>
<dbReference type="iPTMnet" id="Q9D6N1"/>
<dbReference type="PhosphoSitePlus" id="Q9D6N1"/>
<dbReference type="PaxDb" id="10090-ENSMUSP00000029071"/>
<dbReference type="PeptideAtlas" id="Q9D6N1"/>
<dbReference type="ProteomicsDB" id="265420"/>
<dbReference type="Pumba" id="Q9D6N1"/>
<dbReference type="Antibodypedia" id="12589">
    <property type="antibodies" value="196 antibodies from 29 providers"/>
</dbReference>
<dbReference type="DNASU" id="71934"/>
<dbReference type="Ensembl" id="ENSMUST00000029071.9">
    <property type="protein sequence ID" value="ENSMUSP00000029071.9"/>
    <property type="gene ID" value="ENSMUSG00000027555.9"/>
</dbReference>
<dbReference type="GeneID" id="71934"/>
<dbReference type="KEGG" id="mmu:71934"/>
<dbReference type="UCSC" id="uc008oqo.2">
    <property type="organism name" value="mouse"/>
</dbReference>
<dbReference type="AGR" id="MGI:1931322"/>
<dbReference type="CTD" id="71934"/>
<dbReference type="MGI" id="MGI:1931322">
    <property type="gene designation" value="Car13"/>
</dbReference>
<dbReference type="VEuPathDB" id="HostDB:ENSMUSG00000027555"/>
<dbReference type="eggNOG" id="KOG0382">
    <property type="taxonomic scope" value="Eukaryota"/>
</dbReference>
<dbReference type="GeneTree" id="ENSGT00940000160659"/>
<dbReference type="HOGENOM" id="CLU_039326_2_1_1"/>
<dbReference type="InParanoid" id="Q9D6N1"/>
<dbReference type="OMA" id="VPREAQY"/>
<dbReference type="OrthoDB" id="429145at2759"/>
<dbReference type="PhylomeDB" id="Q9D6N1"/>
<dbReference type="TreeFam" id="TF316425"/>
<dbReference type="BRENDA" id="4.2.1.1">
    <property type="organism ID" value="3474"/>
</dbReference>
<dbReference type="Reactome" id="R-MMU-1475029">
    <property type="pathway name" value="Reversible hydration of carbon dioxide"/>
</dbReference>
<dbReference type="BioGRID-ORCS" id="71934">
    <property type="hits" value="2 hits in 77 CRISPR screens"/>
</dbReference>
<dbReference type="PRO" id="PR:Q9D6N1"/>
<dbReference type="Proteomes" id="UP000000589">
    <property type="component" value="Chromosome 3"/>
</dbReference>
<dbReference type="RNAct" id="Q9D6N1">
    <property type="molecule type" value="protein"/>
</dbReference>
<dbReference type="Bgee" id="ENSMUSG00000027555">
    <property type="expression patterns" value="Expressed in meninx and 204 other cell types or tissues"/>
</dbReference>
<dbReference type="GO" id="GO:0005829">
    <property type="term" value="C:cytosol"/>
    <property type="evidence" value="ECO:0000314"/>
    <property type="project" value="MGI"/>
</dbReference>
<dbReference type="GO" id="GO:0043231">
    <property type="term" value="C:intracellular membrane-bounded organelle"/>
    <property type="evidence" value="ECO:0000314"/>
    <property type="project" value="MGI"/>
</dbReference>
<dbReference type="GO" id="GO:0043209">
    <property type="term" value="C:myelin sheath"/>
    <property type="evidence" value="ECO:0000314"/>
    <property type="project" value="MGI"/>
</dbReference>
<dbReference type="GO" id="GO:0004089">
    <property type="term" value="F:carbonate dehydratase activity"/>
    <property type="evidence" value="ECO:0000314"/>
    <property type="project" value="MGI"/>
</dbReference>
<dbReference type="GO" id="GO:0008270">
    <property type="term" value="F:zinc ion binding"/>
    <property type="evidence" value="ECO:0007669"/>
    <property type="project" value="InterPro"/>
</dbReference>
<dbReference type="CDD" id="cd03119">
    <property type="entry name" value="alpha_CA_I_II_III_XIII"/>
    <property type="match status" value="1"/>
</dbReference>
<dbReference type="FunFam" id="3.10.200.10:FF:000001">
    <property type="entry name" value="Carbonic anhydrase 2"/>
    <property type="match status" value="1"/>
</dbReference>
<dbReference type="Gene3D" id="3.10.200.10">
    <property type="entry name" value="Alpha carbonic anhydrase"/>
    <property type="match status" value="1"/>
</dbReference>
<dbReference type="InterPro" id="IPR001148">
    <property type="entry name" value="CA_dom"/>
</dbReference>
<dbReference type="InterPro" id="IPR036398">
    <property type="entry name" value="CA_dom_sf"/>
</dbReference>
<dbReference type="InterPro" id="IPR023561">
    <property type="entry name" value="Carbonic_anhydrase_a-class"/>
</dbReference>
<dbReference type="InterPro" id="IPR018338">
    <property type="entry name" value="Carbonic_anhydrase_a-class_CS"/>
</dbReference>
<dbReference type="PANTHER" id="PTHR18952">
    <property type="entry name" value="CARBONIC ANHYDRASE"/>
    <property type="match status" value="1"/>
</dbReference>
<dbReference type="PANTHER" id="PTHR18952:SF81">
    <property type="entry name" value="CARBONIC ANHYDRASE 13"/>
    <property type="match status" value="1"/>
</dbReference>
<dbReference type="Pfam" id="PF00194">
    <property type="entry name" value="Carb_anhydrase"/>
    <property type="match status" value="1"/>
</dbReference>
<dbReference type="SMART" id="SM01057">
    <property type="entry name" value="Carb_anhydrase"/>
    <property type="match status" value="1"/>
</dbReference>
<dbReference type="SUPFAM" id="SSF51069">
    <property type="entry name" value="Carbonic anhydrase"/>
    <property type="match status" value="1"/>
</dbReference>
<dbReference type="PROSITE" id="PS00162">
    <property type="entry name" value="ALPHA_CA_1"/>
    <property type="match status" value="1"/>
</dbReference>
<dbReference type="PROSITE" id="PS51144">
    <property type="entry name" value="ALPHA_CA_2"/>
    <property type="match status" value="1"/>
</dbReference>
<feature type="chain" id="PRO_0000077441" description="Carbonic anhydrase 13">
    <location>
        <begin position="1"/>
        <end position="262"/>
    </location>
</feature>
<feature type="domain" description="Alpha-carbonic anhydrase" evidence="3">
    <location>
        <begin position="4"/>
        <end position="261"/>
    </location>
</feature>
<feature type="active site" description="Proton donor/acceptor" evidence="1">
    <location>
        <position position="65"/>
    </location>
</feature>
<feature type="binding site" evidence="2">
    <location>
        <position position="95"/>
    </location>
    <ligand>
        <name>Zn(2+)</name>
        <dbReference type="ChEBI" id="CHEBI:29105"/>
        <note>catalytic</note>
    </ligand>
</feature>
<feature type="binding site" evidence="2">
    <location>
        <position position="97"/>
    </location>
    <ligand>
        <name>Zn(2+)</name>
        <dbReference type="ChEBI" id="CHEBI:29105"/>
        <note>catalytic</note>
    </ligand>
</feature>
<feature type="binding site" evidence="2">
    <location>
        <position position="120"/>
    </location>
    <ligand>
        <name>Zn(2+)</name>
        <dbReference type="ChEBI" id="CHEBI:29105"/>
        <note>catalytic</note>
    </ligand>
</feature>
<feature type="binding site" evidence="1">
    <location>
        <begin position="200"/>
        <end position="201"/>
    </location>
    <ligand>
        <name>substrate</name>
    </ligand>
</feature>
<gene>
    <name type="primary">Ca13</name>
    <name type="synonym">Car13</name>
</gene>
<keyword id="KW-0456">Lyase</keyword>
<keyword id="KW-0479">Metal-binding</keyword>
<keyword id="KW-1185">Reference proteome</keyword>
<keyword id="KW-0862">Zinc</keyword>
<reference key="1">
    <citation type="submission" date="2000-02" db="EMBL/GenBank/DDBJ databases">
        <title>Characterization and evolution of two new members of the alpha-carbonic anhydrase gene family in mouse: Car13 and Car15.</title>
        <authorList>
            <person name="Hewett-Emmett D."/>
            <person name="Shimmin L.C."/>
        </authorList>
    </citation>
    <scope>NUCLEOTIDE SEQUENCE [MRNA]</scope>
    <source>
        <strain>C3H/HeJ</strain>
    </source>
</reference>
<reference key="2">
    <citation type="journal article" date="2005" name="Science">
        <title>The transcriptional landscape of the mammalian genome.</title>
        <authorList>
            <person name="Carninci P."/>
            <person name="Kasukawa T."/>
            <person name="Katayama S."/>
            <person name="Gough J."/>
            <person name="Frith M.C."/>
            <person name="Maeda N."/>
            <person name="Oyama R."/>
            <person name="Ravasi T."/>
            <person name="Lenhard B."/>
            <person name="Wells C."/>
            <person name="Kodzius R."/>
            <person name="Shimokawa K."/>
            <person name="Bajic V.B."/>
            <person name="Brenner S.E."/>
            <person name="Batalov S."/>
            <person name="Forrest A.R."/>
            <person name="Zavolan M."/>
            <person name="Davis M.J."/>
            <person name="Wilming L.G."/>
            <person name="Aidinis V."/>
            <person name="Allen J.E."/>
            <person name="Ambesi-Impiombato A."/>
            <person name="Apweiler R."/>
            <person name="Aturaliya R.N."/>
            <person name="Bailey T.L."/>
            <person name="Bansal M."/>
            <person name="Baxter L."/>
            <person name="Beisel K.W."/>
            <person name="Bersano T."/>
            <person name="Bono H."/>
            <person name="Chalk A.M."/>
            <person name="Chiu K.P."/>
            <person name="Choudhary V."/>
            <person name="Christoffels A."/>
            <person name="Clutterbuck D.R."/>
            <person name="Crowe M.L."/>
            <person name="Dalla E."/>
            <person name="Dalrymple B.P."/>
            <person name="de Bono B."/>
            <person name="Della Gatta G."/>
            <person name="di Bernardo D."/>
            <person name="Down T."/>
            <person name="Engstrom P."/>
            <person name="Fagiolini M."/>
            <person name="Faulkner G."/>
            <person name="Fletcher C.F."/>
            <person name="Fukushima T."/>
            <person name="Furuno M."/>
            <person name="Futaki S."/>
            <person name="Gariboldi M."/>
            <person name="Georgii-Hemming P."/>
            <person name="Gingeras T.R."/>
            <person name="Gojobori T."/>
            <person name="Green R.E."/>
            <person name="Gustincich S."/>
            <person name="Harbers M."/>
            <person name="Hayashi Y."/>
            <person name="Hensch T.K."/>
            <person name="Hirokawa N."/>
            <person name="Hill D."/>
            <person name="Huminiecki L."/>
            <person name="Iacono M."/>
            <person name="Ikeo K."/>
            <person name="Iwama A."/>
            <person name="Ishikawa T."/>
            <person name="Jakt M."/>
            <person name="Kanapin A."/>
            <person name="Katoh M."/>
            <person name="Kawasawa Y."/>
            <person name="Kelso J."/>
            <person name="Kitamura H."/>
            <person name="Kitano H."/>
            <person name="Kollias G."/>
            <person name="Krishnan S.P."/>
            <person name="Kruger A."/>
            <person name="Kummerfeld S.K."/>
            <person name="Kurochkin I.V."/>
            <person name="Lareau L.F."/>
            <person name="Lazarevic D."/>
            <person name="Lipovich L."/>
            <person name="Liu J."/>
            <person name="Liuni S."/>
            <person name="McWilliam S."/>
            <person name="Madan Babu M."/>
            <person name="Madera M."/>
            <person name="Marchionni L."/>
            <person name="Matsuda H."/>
            <person name="Matsuzawa S."/>
            <person name="Miki H."/>
            <person name="Mignone F."/>
            <person name="Miyake S."/>
            <person name="Morris K."/>
            <person name="Mottagui-Tabar S."/>
            <person name="Mulder N."/>
            <person name="Nakano N."/>
            <person name="Nakauchi H."/>
            <person name="Ng P."/>
            <person name="Nilsson R."/>
            <person name="Nishiguchi S."/>
            <person name="Nishikawa S."/>
            <person name="Nori F."/>
            <person name="Ohara O."/>
            <person name="Okazaki Y."/>
            <person name="Orlando V."/>
            <person name="Pang K.C."/>
            <person name="Pavan W.J."/>
            <person name="Pavesi G."/>
            <person name="Pesole G."/>
            <person name="Petrovsky N."/>
            <person name="Piazza S."/>
            <person name="Reed J."/>
            <person name="Reid J.F."/>
            <person name="Ring B.Z."/>
            <person name="Ringwald M."/>
            <person name="Rost B."/>
            <person name="Ruan Y."/>
            <person name="Salzberg S.L."/>
            <person name="Sandelin A."/>
            <person name="Schneider C."/>
            <person name="Schoenbach C."/>
            <person name="Sekiguchi K."/>
            <person name="Semple C.A."/>
            <person name="Seno S."/>
            <person name="Sessa L."/>
            <person name="Sheng Y."/>
            <person name="Shibata Y."/>
            <person name="Shimada H."/>
            <person name="Shimada K."/>
            <person name="Silva D."/>
            <person name="Sinclair B."/>
            <person name="Sperling S."/>
            <person name="Stupka E."/>
            <person name="Sugiura K."/>
            <person name="Sultana R."/>
            <person name="Takenaka Y."/>
            <person name="Taki K."/>
            <person name="Tammoja K."/>
            <person name="Tan S.L."/>
            <person name="Tang S."/>
            <person name="Taylor M.S."/>
            <person name="Tegner J."/>
            <person name="Teichmann S.A."/>
            <person name="Ueda H.R."/>
            <person name="van Nimwegen E."/>
            <person name="Verardo R."/>
            <person name="Wei C.L."/>
            <person name="Yagi K."/>
            <person name="Yamanishi H."/>
            <person name="Zabarovsky E."/>
            <person name="Zhu S."/>
            <person name="Zimmer A."/>
            <person name="Hide W."/>
            <person name="Bult C."/>
            <person name="Grimmond S.M."/>
            <person name="Teasdale R.D."/>
            <person name="Liu E.T."/>
            <person name="Brusic V."/>
            <person name="Quackenbush J."/>
            <person name="Wahlestedt C."/>
            <person name="Mattick J.S."/>
            <person name="Hume D.A."/>
            <person name="Kai C."/>
            <person name="Sasaki D."/>
            <person name="Tomaru Y."/>
            <person name="Fukuda S."/>
            <person name="Kanamori-Katayama M."/>
            <person name="Suzuki M."/>
            <person name="Aoki J."/>
            <person name="Arakawa T."/>
            <person name="Iida J."/>
            <person name="Imamura K."/>
            <person name="Itoh M."/>
            <person name="Kato T."/>
            <person name="Kawaji H."/>
            <person name="Kawagashira N."/>
            <person name="Kawashima T."/>
            <person name="Kojima M."/>
            <person name="Kondo S."/>
            <person name="Konno H."/>
            <person name="Nakano K."/>
            <person name="Ninomiya N."/>
            <person name="Nishio T."/>
            <person name="Okada M."/>
            <person name="Plessy C."/>
            <person name="Shibata K."/>
            <person name="Shiraki T."/>
            <person name="Suzuki S."/>
            <person name="Tagami M."/>
            <person name="Waki K."/>
            <person name="Watahiki A."/>
            <person name="Okamura-Oho Y."/>
            <person name="Suzuki H."/>
            <person name="Kawai J."/>
            <person name="Hayashizaki Y."/>
        </authorList>
    </citation>
    <scope>NUCLEOTIDE SEQUENCE [LARGE SCALE MRNA]</scope>
    <source>
        <strain>C57BL/6J</strain>
        <tissue>Bone</tissue>
        <tissue>Bone marrow</tissue>
        <tissue>Tongue</tissue>
    </source>
</reference>
<reference key="3">
    <citation type="journal article" date="2004" name="Genome Res.">
        <title>The status, quality, and expansion of the NIH full-length cDNA project: the Mammalian Gene Collection (MGC).</title>
        <authorList>
            <consortium name="The MGC Project Team"/>
        </authorList>
    </citation>
    <scope>NUCLEOTIDE SEQUENCE [LARGE SCALE MRNA]</scope>
    <source>
        <strain>C57BL/6J</strain>
        <tissue>Mammary gland</tissue>
    </source>
</reference>
<reference key="4">
    <citation type="journal article" date="2004" name="J. Biol. Chem.">
        <title>Characterization of CA XIII, a novel member of the carbonic anhydrase isozyme family.</title>
        <authorList>
            <person name="Lehtonen J."/>
            <person name="Shen B."/>
            <person name="Vihinen M."/>
            <person name="Casini A."/>
            <person name="Scozzafava A."/>
            <person name="Supuran C.T."/>
            <person name="Parkkila A.-K."/>
            <person name="Saarnio J."/>
            <person name="Kivelae A.J."/>
            <person name="Waheed A."/>
            <person name="Sly W.S."/>
            <person name="Parkkila S."/>
        </authorList>
    </citation>
    <scope>CATALYTIC ACTIVITY</scope>
    <scope>FUNCTION</scope>
    <scope>TISSUE SPECIFICITY</scope>
</reference>
<reference key="5">
    <citation type="journal article" date="2007" name="Bioorg. Med. Chem. Lett.">
        <title>Phosph(on)ate as a zinc-binding group in metalloenzyme inhibitors: X-ray crystal structure of the antiviral drug foscarnet complexed to human carbonic anhydrase I.</title>
        <authorList>
            <person name="Temperini C."/>
            <person name="Innocenti A."/>
            <person name="Guerri A."/>
            <person name="Scozzafava A."/>
            <person name="Rusconi S."/>
            <person name="Supuran C.T."/>
        </authorList>
    </citation>
    <scope>ACTIVITY REGULATION</scope>
</reference>
<reference key="6">
    <citation type="journal article" date="2009" name="Bioorg. Med. Chem. Lett.">
        <title>A thiabendazole sulfonamide shows potent inhibitory activity against mammalian and nematode alpha-carbonic anhydrases.</title>
        <authorList>
            <person name="Crocetti L."/>
            <person name="Maresca A."/>
            <person name="Temperini C."/>
            <person name="Hall R.A."/>
            <person name="Scozzafava A."/>
            <person name="Muehlschlegel F.A."/>
            <person name="Supuran C.T."/>
        </authorList>
    </citation>
    <scope>ACTIVITY REGULATION</scope>
</reference>
<reference key="7">
    <citation type="journal article" date="2009" name="J. Am. Chem. Soc.">
        <title>Non-zinc mediated inhibition of carbonic anhydrases: coumarins are a new class of suicide inhibitors.</title>
        <authorList>
            <person name="Maresca A."/>
            <person name="Temperini C."/>
            <person name="Vu H."/>
            <person name="Pham N.B."/>
            <person name="Poulsen S.-A."/>
            <person name="Scozzafava A."/>
            <person name="Quinn R.J."/>
            <person name="Supuran C.T."/>
        </authorList>
    </citation>
    <scope>ACTIVITY REGULATION</scope>
</reference>
<accession>Q9D6N1</accession>
<accession>Q3UBM2</accession>
<organism>
    <name type="scientific">Mus musculus</name>
    <name type="common">Mouse</name>
    <dbReference type="NCBI Taxonomy" id="10090"/>
    <lineage>
        <taxon>Eukaryota</taxon>
        <taxon>Metazoa</taxon>
        <taxon>Chordata</taxon>
        <taxon>Craniata</taxon>
        <taxon>Vertebrata</taxon>
        <taxon>Euteleostomi</taxon>
        <taxon>Mammalia</taxon>
        <taxon>Eutheria</taxon>
        <taxon>Euarchontoglires</taxon>
        <taxon>Glires</taxon>
        <taxon>Rodentia</taxon>
        <taxon>Myomorpha</taxon>
        <taxon>Muroidea</taxon>
        <taxon>Muridae</taxon>
        <taxon>Murinae</taxon>
        <taxon>Mus</taxon>
        <taxon>Mus</taxon>
    </lineage>
</organism>
<proteinExistence type="evidence at protein level"/>
<sequence>MARLSWGYGEHNGPIHWNELFPIADGDQQSPIEIKTKEVKYDSSLRPLSIKYDPASAKIISNSGHSFNVDFDDTEDKSVLRGGPLTGNYRLRQFHLHWGSADDHGSEHVVDGVRYAAELHVVHWNSDKYPSFVEAAHESDGLAVLGVFLQIGEHNPQLQKITDILDSIKEKGKQTRFTNFDPLCLLPSSWDYWTYPGSLTVPPLLESVTWIVLKQPISISSQQLARFRSLLCTAEGESAAFLLSNHRPPQPLKGRRVRASFY</sequence>
<evidence type="ECO:0000250" key="1">
    <source>
        <dbReference type="UniProtKB" id="P00918"/>
    </source>
</evidence>
<evidence type="ECO:0000250" key="2">
    <source>
        <dbReference type="UniProtKB" id="Q8N1Q1"/>
    </source>
</evidence>
<evidence type="ECO:0000255" key="3">
    <source>
        <dbReference type="PROSITE-ProRule" id="PRU01134"/>
    </source>
</evidence>
<evidence type="ECO:0000269" key="4">
    <source>
    </source>
</evidence>
<evidence type="ECO:0000269" key="5">
    <source>
    </source>
</evidence>
<evidence type="ECO:0000269" key="6">
    <source>
    </source>
</evidence>
<evidence type="ECO:0000269" key="7">
    <source>
    </source>
</evidence>
<evidence type="ECO:0000305" key="8"/>
<name>CAH13_MOUSE</name>
<protein>
    <recommendedName>
        <fullName>Carbonic anhydrase 13</fullName>
        <ecNumber evidence="4">4.2.1.1</ecNumber>
    </recommendedName>
    <alternativeName>
        <fullName>Carbonate dehydratase XIII</fullName>
    </alternativeName>
    <alternativeName>
        <fullName>Carbonic anhydrase XIII</fullName>
        <shortName>CA-XIII</shortName>
    </alternativeName>
</protein>